<keyword id="KW-1185">Reference proteome</keyword>
<gene>
    <name type="ordered locus">CKO_01183</name>
</gene>
<comment type="sequence caution" evidence="3">
    <conflict type="erroneous initiation">
        <sequence resource="EMBL-CDS" id="ABV12323"/>
    </conflict>
</comment>
<reference key="1">
    <citation type="submission" date="2007-08" db="EMBL/GenBank/DDBJ databases">
        <authorList>
            <consortium name="The Citrobacter koseri Genome Sequencing Project"/>
            <person name="McClelland M."/>
            <person name="Sanderson E.K."/>
            <person name="Porwollik S."/>
            <person name="Spieth J."/>
            <person name="Clifton W.S."/>
            <person name="Latreille P."/>
            <person name="Courtney L."/>
            <person name="Wang C."/>
            <person name="Pepin K."/>
            <person name="Bhonagiri V."/>
            <person name="Nash W."/>
            <person name="Johnson M."/>
            <person name="Thiruvilangam P."/>
            <person name="Wilson R."/>
        </authorList>
    </citation>
    <scope>NUCLEOTIDE SEQUENCE [LARGE SCALE GENOMIC DNA]</scope>
    <source>
        <strain>ATCC BAA-895 / CDC 4225-83 / SGSC4696</strain>
    </source>
</reference>
<dbReference type="EMBL" id="CP000822">
    <property type="protein sequence ID" value="ABV12323.1"/>
    <property type="status" value="ALT_INIT"/>
    <property type="molecule type" value="Genomic_DNA"/>
</dbReference>
<dbReference type="RefSeq" id="WP_024130270.1">
    <property type="nucleotide sequence ID" value="NC_009792.1"/>
</dbReference>
<dbReference type="SMR" id="A8AFR0"/>
<dbReference type="STRING" id="290338.CKO_01183"/>
<dbReference type="GeneID" id="45135314"/>
<dbReference type="KEGG" id="cko:CKO_01183"/>
<dbReference type="HOGENOM" id="CLU_1873951_0_0_6"/>
<dbReference type="OrthoDB" id="7062382at2"/>
<dbReference type="Proteomes" id="UP000008148">
    <property type="component" value="Chromosome"/>
</dbReference>
<dbReference type="Gene3D" id="3.10.510.20">
    <property type="entry name" value="YcgL domain"/>
    <property type="match status" value="1"/>
</dbReference>
<dbReference type="HAMAP" id="MF_01866">
    <property type="entry name" value="UPF0745"/>
    <property type="match status" value="1"/>
</dbReference>
<dbReference type="InterPro" id="IPR038068">
    <property type="entry name" value="YcgL-like_sf"/>
</dbReference>
<dbReference type="InterPro" id="IPR027354">
    <property type="entry name" value="YcgL_dom"/>
</dbReference>
<dbReference type="PANTHER" id="PTHR38109">
    <property type="entry name" value="PROTEIN YCGL"/>
    <property type="match status" value="1"/>
</dbReference>
<dbReference type="PANTHER" id="PTHR38109:SF1">
    <property type="entry name" value="PROTEIN YCGL"/>
    <property type="match status" value="1"/>
</dbReference>
<dbReference type="Pfam" id="PF05166">
    <property type="entry name" value="YcgL"/>
    <property type="match status" value="1"/>
</dbReference>
<dbReference type="SUPFAM" id="SSF160191">
    <property type="entry name" value="YcgL-like"/>
    <property type="match status" value="1"/>
</dbReference>
<dbReference type="PROSITE" id="PS51648">
    <property type="entry name" value="YCGL"/>
    <property type="match status" value="1"/>
</dbReference>
<protein>
    <recommendedName>
        <fullName evidence="1">YcgL domain-containing protein CKO_01183</fullName>
    </recommendedName>
</protein>
<evidence type="ECO:0000255" key="1">
    <source>
        <dbReference type="HAMAP-Rule" id="MF_01866"/>
    </source>
</evidence>
<evidence type="ECO:0000256" key="2">
    <source>
        <dbReference type="SAM" id="MobiDB-lite"/>
    </source>
</evidence>
<evidence type="ECO:0000305" key="3"/>
<organism>
    <name type="scientific">Citrobacter koseri (strain ATCC BAA-895 / CDC 4225-83 / SGSC4696)</name>
    <dbReference type="NCBI Taxonomy" id="290338"/>
    <lineage>
        <taxon>Bacteria</taxon>
        <taxon>Pseudomonadati</taxon>
        <taxon>Pseudomonadota</taxon>
        <taxon>Gammaproteobacteria</taxon>
        <taxon>Enterobacterales</taxon>
        <taxon>Enterobacteriaceae</taxon>
        <taxon>Citrobacter</taxon>
    </lineage>
</organism>
<feature type="chain" id="PRO_0000375283" description="YcgL domain-containing protein CKO_01183">
    <location>
        <begin position="1"/>
        <end position="97"/>
    </location>
</feature>
<feature type="domain" description="YcgL" evidence="1">
    <location>
        <begin position="1"/>
        <end position="85"/>
    </location>
</feature>
<feature type="region of interest" description="Disordered" evidence="2">
    <location>
        <begin position="74"/>
        <end position="97"/>
    </location>
</feature>
<accession>A8AFR0</accession>
<sequence length="97" mass="11069">MFCVIYRSSKRDQTYLYVEKKDDFSRVPEDLMKGFGQPTLAMILPLDGRKKLVNADLEKVKQALTDQGYYLQLPPPPEDLLKQHLSAPGENKPDAKS</sequence>
<name>Y1183_CITK8</name>
<proteinExistence type="inferred from homology"/>